<organism>
    <name type="scientific">Sulfurihydrogenibium sp. (strain YO3AOP1)</name>
    <dbReference type="NCBI Taxonomy" id="436114"/>
    <lineage>
        <taxon>Bacteria</taxon>
        <taxon>Pseudomonadati</taxon>
        <taxon>Aquificota</taxon>
        <taxon>Aquificia</taxon>
        <taxon>Aquificales</taxon>
        <taxon>Hydrogenothermaceae</taxon>
        <taxon>Sulfurihydrogenibium</taxon>
    </lineage>
</organism>
<protein>
    <recommendedName>
        <fullName evidence="1">Large ribosomal subunit protein uL14</fullName>
    </recommendedName>
    <alternativeName>
        <fullName evidence="2">50S ribosomal protein L14</fullName>
    </alternativeName>
</protein>
<proteinExistence type="inferred from homology"/>
<name>RL14_SULSY</name>
<dbReference type="EMBL" id="CP001080">
    <property type="protein sequence ID" value="ACD65926.1"/>
    <property type="molecule type" value="Genomic_DNA"/>
</dbReference>
<dbReference type="RefSeq" id="WP_012459015.1">
    <property type="nucleotide sequence ID" value="NC_010730.1"/>
</dbReference>
<dbReference type="SMR" id="B2V7K3"/>
<dbReference type="STRING" id="436114.SYO3AOP1_0281"/>
<dbReference type="KEGG" id="sul:SYO3AOP1_0281"/>
<dbReference type="eggNOG" id="COG0093">
    <property type="taxonomic scope" value="Bacteria"/>
</dbReference>
<dbReference type="HOGENOM" id="CLU_095071_2_1_0"/>
<dbReference type="GO" id="GO:0022625">
    <property type="term" value="C:cytosolic large ribosomal subunit"/>
    <property type="evidence" value="ECO:0007669"/>
    <property type="project" value="TreeGrafter"/>
</dbReference>
<dbReference type="GO" id="GO:0070180">
    <property type="term" value="F:large ribosomal subunit rRNA binding"/>
    <property type="evidence" value="ECO:0007669"/>
    <property type="project" value="TreeGrafter"/>
</dbReference>
<dbReference type="GO" id="GO:0003735">
    <property type="term" value="F:structural constituent of ribosome"/>
    <property type="evidence" value="ECO:0007669"/>
    <property type="project" value="InterPro"/>
</dbReference>
<dbReference type="GO" id="GO:0006412">
    <property type="term" value="P:translation"/>
    <property type="evidence" value="ECO:0007669"/>
    <property type="project" value="UniProtKB-UniRule"/>
</dbReference>
<dbReference type="CDD" id="cd00337">
    <property type="entry name" value="Ribosomal_uL14"/>
    <property type="match status" value="1"/>
</dbReference>
<dbReference type="Gene3D" id="2.40.150.20">
    <property type="entry name" value="Ribosomal protein L14"/>
    <property type="match status" value="1"/>
</dbReference>
<dbReference type="HAMAP" id="MF_01367">
    <property type="entry name" value="Ribosomal_uL14"/>
    <property type="match status" value="1"/>
</dbReference>
<dbReference type="InterPro" id="IPR000218">
    <property type="entry name" value="Ribosomal_uL14"/>
</dbReference>
<dbReference type="InterPro" id="IPR005745">
    <property type="entry name" value="Ribosomal_uL14_bac-type"/>
</dbReference>
<dbReference type="InterPro" id="IPR036853">
    <property type="entry name" value="Ribosomal_uL14_sf"/>
</dbReference>
<dbReference type="NCBIfam" id="TIGR01067">
    <property type="entry name" value="rplN_bact"/>
    <property type="match status" value="1"/>
</dbReference>
<dbReference type="PANTHER" id="PTHR11761">
    <property type="entry name" value="50S/60S RIBOSOMAL PROTEIN L14/L23"/>
    <property type="match status" value="1"/>
</dbReference>
<dbReference type="PANTHER" id="PTHR11761:SF3">
    <property type="entry name" value="LARGE RIBOSOMAL SUBUNIT PROTEIN UL14M"/>
    <property type="match status" value="1"/>
</dbReference>
<dbReference type="Pfam" id="PF00238">
    <property type="entry name" value="Ribosomal_L14"/>
    <property type="match status" value="1"/>
</dbReference>
<dbReference type="SMART" id="SM01374">
    <property type="entry name" value="Ribosomal_L14"/>
    <property type="match status" value="1"/>
</dbReference>
<dbReference type="SUPFAM" id="SSF50193">
    <property type="entry name" value="Ribosomal protein L14"/>
    <property type="match status" value="1"/>
</dbReference>
<evidence type="ECO:0000255" key="1">
    <source>
        <dbReference type="HAMAP-Rule" id="MF_01367"/>
    </source>
</evidence>
<evidence type="ECO:0000305" key="2"/>
<sequence>MIQRGTYLNTADNSGAKLVQCIGIPGGAKKMHATVGDVITVTVKSAIPSGTAKKGKVYKAVVVRTKKEVARPDGSYVKADDNAVVLLNNQLEPIGTRILGPVCRELRSKGFYRIVSLAPEVI</sequence>
<keyword id="KW-0687">Ribonucleoprotein</keyword>
<keyword id="KW-0689">Ribosomal protein</keyword>
<keyword id="KW-0694">RNA-binding</keyword>
<keyword id="KW-0699">rRNA-binding</keyword>
<accession>B2V7K3</accession>
<gene>
    <name evidence="1" type="primary">rplN</name>
    <name type="ordered locus">SYO3AOP1_0281</name>
</gene>
<comment type="function">
    <text evidence="1">Binds to 23S rRNA. Forms part of two intersubunit bridges in the 70S ribosome.</text>
</comment>
<comment type="subunit">
    <text evidence="1">Part of the 50S ribosomal subunit. Forms a cluster with proteins L3 and L19. In the 70S ribosome, L14 and L19 interact and together make contacts with the 16S rRNA in bridges B5 and B8.</text>
</comment>
<comment type="similarity">
    <text evidence="1">Belongs to the universal ribosomal protein uL14 family.</text>
</comment>
<reference key="1">
    <citation type="journal article" date="2009" name="J. Bacteriol.">
        <title>Complete and draft genome sequences of six members of the Aquificales.</title>
        <authorList>
            <person name="Reysenbach A.-L."/>
            <person name="Hamamura N."/>
            <person name="Podar M."/>
            <person name="Griffiths E."/>
            <person name="Ferreira S."/>
            <person name="Hochstein R."/>
            <person name="Heidelberg J."/>
            <person name="Johnson J."/>
            <person name="Mead D."/>
            <person name="Pohorille A."/>
            <person name="Sarmiento M."/>
            <person name="Schweighofer K."/>
            <person name="Seshadri R."/>
            <person name="Voytek M.A."/>
        </authorList>
    </citation>
    <scope>NUCLEOTIDE SEQUENCE [LARGE SCALE GENOMIC DNA]</scope>
    <source>
        <strain>YO3AOP1</strain>
    </source>
</reference>
<feature type="chain" id="PRO_0000355839" description="Large ribosomal subunit protein uL14">
    <location>
        <begin position="1"/>
        <end position="122"/>
    </location>
</feature>